<comment type="function">
    <text evidence="1">This is one of the proteins that bind and probably mediate the attachment of the 5S RNA into the large ribosomal subunit, where it forms part of the central protuberance. In the 70S ribosome it contacts protein S13 of the 30S subunit (bridge B1b), connecting the 2 subunits; this bridge is implicated in subunit movement. Contacts the P site tRNA; the 5S rRNA and some of its associated proteins might help stabilize positioning of ribosome-bound tRNAs.</text>
</comment>
<comment type="subunit">
    <text evidence="1">Part of the 50S ribosomal subunit; part of the 5S rRNA/L5/L18/L25 subcomplex. Contacts the 5S rRNA and the P site tRNA. Forms a bridge to the 30S subunit in the 70S ribosome.</text>
</comment>
<comment type="similarity">
    <text evidence="1">Belongs to the universal ribosomal protein uL5 family.</text>
</comment>
<name>RL5_MYCSK</name>
<reference key="1">
    <citation type="submission" date="2006-12" db="EMBL/GenBank/DDBJ databases">
        <title>Complete sequence of chromosome of Mycobacterium sp. KMS.</title>
        <authorList>
            <consortium name="US DOE Joint Genome Institute"/>
            <person name="Copeland A."/>
            <person name="Lucas S."/>
            <person name="Lapidus A."/>
            <person name="Barry K."/>
            <person name="Detter J.C."/>
            <person name="Glavina del Rio T."/>
            <person name="Hammon N."/>
            <person name="Israni S."/>
            <person name="Dalin E."/>
            <person name="Tice H."/>
            <person name="Pitluck S."/>
            <person name="Kiss H."/>
            <person name="Brettin T."/>
            <person name="Bruce D."/>
            <person name="Han C."/>
            <person name="Tapia R."/>
            <person name="Gilna P."/>
            <person name="Schmutz J."/>
            <person name="Larimer F."/>
            <person name="Land M."/>
            <person name="Hauser L."/>
            <person name="Kyrpides N."/>
            <person name="Mikhailova N."/>
            <person name="Miller C.D."/>
            <person name="Richardson P."/>
        </authorList>
    </citation>
    <scope>NUCLEOTIDE SEQUENCE [LARGE SCALE GENOMIC DNA]</scope>
    <source>
        <strain>KMS</strain>
    </source>
</reference>
<feature type="chain" id="PRO_1000052779" description="Large ribosomal subunit protein uL5">
    <location>
        <begin position="1"/>
        <end position="187"/>
    </location>
</feature>
<protein>
    <recommendedName>
        <fullName evidence="1">Large ribosomal subunit protein uL5</fullName>
    </recommendedName>
    <alternativeName>
        <fullName evidence="2">50S ribosomal protein L5</fullName>
    </alternativeName>
</protein>
<dbReference type="EMBL" id="CP000518">
    <property type="protein sequence ID" value="ABL90258.1"/>
    <property type="molecule type" value="Genomic_DNA"/>
</dbReference>
<dbReference type="SMR" id="A1UBQ0"/>
<dbReference type="STRING" id="189918.Mkms_1044"/>
<dbReference type="KEGG" id="mkm:Mkms_1044"/>
<dbReference type="HOGENOM" id="CLU_061015_2_1_11"/>
<dbReference type="OrthoDB" id="9806626at2"/>
<dbReference type="GO" id="GO:1990904">
    <property type="term" value="C:ribonucleoprotein complex"/>
    <property type="evidence" value="ECO:0007669"/>
    <property type="project" value="UniProtKB-KW"/>
</dbReference>
<dbReference type="GO" id="GO:0005840">
    <property type="term" value="C:ribosome"/>
    <property type="evidence" value="ECO:0007669"/>
    <property type="project" value="UniProtKB-KW"/>
</dbReference>
<dbReference type="GO" id="GO:0019843">
    <property type="term" value="F:rRNA binding"/>
    <property type="evidence" value="ECO:0007669"/>
    <property type="project" value="UniProtKB-UniRule"/>
</dbReference>
<dbReference type="GO" id="GO:0003735">
    <property type="term" value="F:structural constituent of ribosome"/>
    <property type="evidence" value="ECO:0007669"/>
    <property type="project" value="InterPro"/>
</dbReference>
<dbReference type="GO" id="GO:0000049">
    <property type="term" value="F:tRNA binding"/>
    <property type="evidence" value="ECO:0007669"/>
    <property type="project" value="UniProtKB-UniRule"/>
</dbReference>
<dbReference type="GO" id="GO:0006412">
    <property type="term" value="P:translation"/>
    <property type="evidence" value="ECO:0007669"/>
    <property type="project" value="UniProtKB-UniRule"/>
</dbReference>
<dbReference type="FunFam" id="3.30.1440.10:FF:000001">
    <property type="entry name" value="50S ribosomal protein L5"/>
    <property type="match status" value="1"/>
</dbReference>
<dbReference type="Gene3D" id="3.30.1440.10">
    <property type="match status" value="1"/>
</dbReference>
<dbReference type="HAMAP" id="MF_01333_B">
    <property type="entry name" value="Ribosomal_uL5_B"/>
    <property type="match status" value="1"/>
</dbReference>
<dbReference type="InterPro" id="IPR002132">
    <property type="entry name" value="Ribosomal_uL5"/>
</dbReference>
<dbReference type="InterPro" id="IPR020930">
    <property type="entry name" value="Ribosomal_uL5_bac-type"/>
</dbReference>
<dbReference type="InterPro" id="IPR031309">
    <property type="entry name" value="Ribosomal_uL5_C"/>
</dbReference>
<dbReference type="InterPro" id="IPR022803">
    <property type="entry name" value="Ribosomal_uL5_dom_sf"/>
</dbReference>
<dbReference type="InterPro" id="IPR031310">
    <property type="entry name" value="Ribosomal_uL5_N"/>
</dbReference>
<dbReference type="NCBIfam" id="NF000585">
    <property type="entry name" value="PRK00010.1"/>
    <property type="match status" value="1"/>
</dbReference>
<dbReference type="PANTHER" id="PTHR11994">
    <property type="entry name" value="60S RIBOSOMAL PROTEIN L11-RELATED"/>
    <property type="match status" value="1"/>
</dbReference>
<dbReference type="Pfam" id="PF00281">
    <property type="entry name" value="Ribosomal_L5"/>
    <property type="match status" value="1"/>
</dbReference>
<dbReference type="Pfam" id="PF00673">
    <property type="entry name" value="Ribosomal_L5_C"/>
    <property type="match status" value="1"/>
</dbReference>
<dbReference type="PIRSF" id="PIRSF002161">
    <property type="entry name" value="Ribosomal_L5"/>
    <property type="match status" value="1"/>
</dbReference>
<dbReference type="SUPFAM" id="SSF55282">
    <property type="entry name" value="RL5-like"/>
    <property type="match status" value="1"/>
</dbReference>
<organism>
    <name type="scientific">Mycobacterium sp. (strain KMS)</name>
    <dbReference type="NCBI Taxonomy" id="189918"/>
    <lineage>
        <taxon>Bacteria</taxon>
        <taxon>Bacillati</taxon>
        <taxon>Actinomycetota</taxon>
        <taxon>Actinomycetes</taxon>
        <taxon>Mycobacteriales</taxon>
        <taxon>Mycobacteriaceae</taxon>
        <taxon>Mycobacterium</taxon>
    </lineage>
</organism>
<keyword id="KW-0687">Ribonucleoprotein</keyword>
<keyword id="KW-0689">Ribosomal protein</keyword>
<keyword id="KW-0694">RNA-binding</keyword>
<keyword id="KW-0699">rRNA-binding</keyword>
<keyword id="KW-0820">tRNA-binding</keyword>
<proteinExistence type="inferred from homology"/>
<gene>
    <name evidence="1" type="primary">rplE</name>
    <name type="ordered locus">Mkms_1044</name>
</gene>
<evidence type="ECO:0000255" key="1">
    <source>
        <dbReference type="HAMAP-Rule" id="MF_01333"/>
    </source>
</evidence>
<evidence type="ECO:0000305" key="2"/>
<sequence>MTTAEKTLPRLKQRYREEIRESLQQQFGYANVMQIPGVVKVVVNMGVGDAARDAKLINGAVNDLALITGQKPEIRRARKSIAQFKLREGMPIGARVTLRGDRMWEFLDRLVAIALPRIRDFRGLNPKQFDGTGNYTFGLTEQSMFHEIDVDSIDRPRGMDITVVTSATTDDEGRALLRALGFPFKEN</sequence>
<accession>A1UBQ0</accession>